<evidence type="ECO:0000250" key="1"/>
<evidence type="ECO:0000250" key="2">
    <source>
        <dbReference type="UniProtKB" id="Q9WU34"/>
    </source>
</evidence>
<evidence type="ECO:0000255" key="3">
    <source>
        <dbReference type="PROSITE-ProRule" id="PRU01056"/>
    </source>
</evidence>
<evidence type="ECO:0000256" key="4">
    <source>
        <dbReference type="SAM" id="MobiDB-lite"/>
    </source>
</evidence>
<evidence type="ECO:0000269" key="5">
    <source>
    </source>
</evidence>
<evidence type="ECO:0000269" key="6">
    <source>
    </source>
</evidence>
<evidence type="ECO:0000269" key="7">
    <source>
    </source>
</evidence>
<evidence type="ECO:0000303" key="8">
    <source>
    </source>
</evidence>
<evidence type="ECO:0000303" key="9">
    <source>
    </source>
</evidence>
<evidence type="ECO:0000303" key="10">
    <source>
    </source>
</evidence>
<evidence type="ECO:0000303" key="11">
    <source ref="7"/>
</evidence>
<evidence type="ECO:0000305" key="12"/>
<evidence type="ECO:0000312" key="13">
    <source>
        <dbReference type="HGNC" id="HGNC:10750"/>
    </source>
</evidence>
<evidence type="ECO:0007829" key="14">
    <source>
        <dbReference type="PDB" id="3SOP"/>
    </source>
</evidence>
<evidence type="ECO:0007829" key="15">
    <source>
        <dbReference type="PDB" id="4Z54"/>
    </source>
</evidence>
<evidence type="ECO:0007829" key="16">
    <source>
        <dbReference type="PDB" id="6UQQ"/>
    </source>
</evidence>
<accession>Q9UH03</accession>
<accession>B1AHR0</accession>
<accession>Q2NKJ7</accession>
<accession>Q59GF7</accession>
<accession>Q6IBZ6</accession>
<accession>Q8N3P3</accession>
<accession>Q9HD35</accession>
<protein>
    <recommendedName>
        <fullName>Neuronal-specific septin-3</fullName>
    </recommendedName>
</protein>
<organism>
    <name type="scientific">Homo sapiens</name>
    <name type="common">Human</name>
    <dbReference type="NCBI Taxonomy" id="9606"/>
    <lineage>
        <taxon>Eukaryota</taxon>
        <taxon>Metazoa</taxon>
        <taxon>Chordata</taxon>
        <taxon>Craniata</taxon>
        <taxon>Vertebrata</taxon>
        <taxon>Euteleostomi</taxon>
        <taxon>Mammalia</taxon>
        <taxon>Eutheria</taxon>
        <taxon>Euarchontoglires</taxon>
        <taxon>Primates</taxon>
        <taxon>Haplorrhini</taxon>
        <taxon>Catarrhini</taxon>
        <taxon>Hominidae</taxon>
        <taxon>Homo</taxon>
    </lineage>
</organism>
<dbReference type="EMBL" id="AF285107">
    <property type="protein sequence ID" value="AAG00517.1"/>
    <property type="status" value="ALT_INIT"/>
    <property type="molecule type" value="mRNA"/>
</dbReference>
<dbReference type="EMBL" id="AF285108">
    <property type="protein sequence ID" value="AAG00518.1"/>
    <property type="status" value="ALT_INIT"/>
    <property type="molecule type" value="mRNA"/>
</dbReference>
<dbReference type="EMBL" id="AF285109">
    <property type="protein sequence ID" value="AAG00519.1"/>
    <property type="status" value="ALT_INIT"/>
    <property type="molecule type" value="mRNA"/>
</dbReference>
<dbReference type="EMBL" id="CR456572">
    <property type="protein sequence ID" value="CAG30458.1"/>
    <property type="status" value="ALT_INIT"/>
    <property type="molecule type" value="mRNA"/>
</dbReference>
<dbReference type="EMBL" id="AL833942">
    <property type="protein sequence ID" value="CAD38797.1"/>
    <property type="status" value="ALT_INIT"/>
    <property type="molecule type" value="mRNA"/>
</dbReference>
<dbReference type="EMBL" id="Z99716">
    <property type="status" value="NOT_ANNOTATED_CDS"/>
    <property type="molecule type" value="Genomic_DNA"/>
</dbReference>
<dbReference type="EMBL" id="CH471095">
    <property type="protein sequence ID" value="EAW60480.1"/>
    <property type="molecule type" value="Genomic_DNA"/>
</dbReference>
<dbReference type="EMBL" id="BC111779">
    <property type="protein sequence ID" value="AAI11780.2"/>
    <property type="status" value="ALT_INIT"/>
    <property type="molecule type" value="mRNA"/>
</dbReference>
<dbReference type="EMBL" id="AB209152">
    <property type="protein sequence ID" value="BAD92389.1"/>
    <property type="molecule type" value="mRNA"/>
</dbReference>
<dbReference type="CCDS" id="CCDS14026.2">
    <molecule id="Q9UH03-1"/>
</dbReference>
<dbReference type="CCDS" id="CCDS14027.2">
    <molecule id="Q9UH03-2"/>
</dbReference>
<dbReference type="PIR" id="JC7681">
    <property type="entry name" value="JC7681"/>
</dbReference>
<dbReference type="RefSeq" id="NP_061979.3">
    <molecule id="Q9UH03-2"/>
    <property type="nucleotide sequence ID" value="NM_019106.5"/>
</dbReference>
<dbReference type="RefSeq" id="NP_663786.2">
    <molecule id="Q9UH03-1"/>
    <property type="nucleotide sequence ID" value="NM_145733.3"/>
</dbReference>
<dbReference type="PDB" id="3SOP">
    <property type="method" value="X-ray"/>
    <property type="resolution" value="2.88 A"/>
    <property type="chains" value="A/B=60-329"/>
</dbReference>
<dbReference type="PDB" id="4Z51">
    <property type="method" value="X-ray"/>
    <property type="resolution" value="1.86 A"/>
    <property type="chains" value="A=60-330"/>
</dbReference>
<dbReference type="PDB" id="4Z54">
    <property type="method" value="X-ray"/>
    <property type="resolution" value="1.83 A"/>
    <property type="chains" value="A/B=43-329"/>
</dbReference>
<dbReference type="PDB" id="6UQQ">
    <property type="method" value="X-ray"/>
    <property type="resolution" value="2.75 A"/>
    <property type="chains" value="C/D=59-337"/>
</dbReference>
<dbReference type="PDBsum" id="3SOP"/>
<dbReference type="PDBsum" id="4Z51"/>
<dbReference type="PDBsum" id="4Z54"/>
<dbReference type="PDBsum" id="6UQQ"/>
<dbReference type="SMR" id="Q9UH03"/>
<dbReference type="BioGRID" id="121011">
    <property type="interactions" value="56"/>
</dbReference>
<dbReference type="ComplexPortal" id="CPX-25761">
    <property type="entry name" value="Septin complex, octamer variant, SEPT2-SEPT6-SEPT-7-SEPT3"/>
</dbReference>
<dbReference type="FunCoup" id="Q9UH03">
    <property type="interactions" value="282"/>
</dbReference>
<dbReference type="IntAct" id="Q9UH03">
    <property type="interactions" value="52"/>
</dbReference>
<dbReference type="MINT" id="Q9UH03"/>
<dbReference type="STRING" id="9606.ENSP00000494051"/>
<dbReference type="iPTMnet" id="Q9UH03"/>
<dbReference type="PhosphoSitePlus" id="Q9UH03"/>
<dbReference type="SwissPalm" id="Q9UH03"/>
<dbReference type="BioMuta" id="SEPT3"/>
<dbReference type="DMDM" id="147744590"/>
<dbReference type="jPOST" id="Q9UH03"/>
<dbReference type="MassIVE" id="Q9UH03"/>
<dbReference type="PaxDb" id="9606-ENSP00000379704"/>
<dbReference type="PeptideAtlas" id="Q9UH03"/>
<dbReference type="ProteomicsDB" id="84271">
    <molecule id="Q9UH03-1"/>
</dbReference>
<dbReference type="ProteomicsDB" id="84272">
    <molecule id="Q9UH03-2"/>
</dbReference>
<dbReference type="ProteomicsDB" id="84273">
    <molecule id="Q9UH03-3"/>
</dbReference>
<dbReference type="Pumba" id="Q9UH03"/>
<dbReference type="Antibodypedia" id="290">
    <property type="antibodies" value="276 antibodies from 32 providers"/>
</dbReference>
<dbReference type="DNASU" id="55964"/>
<dbReference type="Ensembl" id="ENST00000396417.2">
    <molecule id="Q9UH03-3"/>
    <property type="protein sequence ID" value="ENSP00000379695.2"/>
    <property type="gene ID" value="ENSG00000100167.21"/>
</dbReference>
<dbReference type="Ensembl" id="ENST00000396425.8">
    <molecule id="Q9UH03-2"/>
    <property type="protein sequence ID" value="ENSP00000379703.3"/>
    <property type="gene ID" value="ENSG00000100167.21"/>
</dbReference>
<dbReference type="Ensembl" id="ENST00000396426.7">
    <molecule id="Q9UH03-1"/>
    <property type="protein sequence ID" value="ENSP00000379704.3"/>
    <property type="gene ID" value="ENSG00000100167.21"/>
</dbReference>
<dbReference type="GeneID" id="55964"/>
<dbReference type="KEGG" id="hsa:55964"/>
<dbReference type="UCSC" id="uc003bbr.5">
    <molecule id="Q9UH03-1"/>
    <property type="organism name" value="human"/>
</dbReference>
<dbReference type="AGR" id="HGNC:10750"/>
<dbReference type="CTD" id="55964"/>
<dbReference type="DisGeNET" id="55964"/>
<dbReference type="GeneCards" id="SEPTIN3"/>
<dbReference type="HGNC" id="HGNC:10750">
    <property type="gene designation" value="SEPTIN3"/>
</dbReference>
<dbReference type="HPA" id="ENSG00000100167">
    <property type="expression patterns" value="Tissue enriched (brain)"/>
</dbReference>
<dbReference type="MIM" id="608314">
    <property type="type" value="gene"/>
</dbReference>
<dbReference type="neXtProt" id="NX_Q9UH03"/>
<dbReference type="OpenTargets" id="ENSG00000100167"/>
<dbReference type="PharmGKB" id="PA24355"/>
<dbReference type="VEuPathDB" id="HostDB:ENSG00000100167"/>
<dbReference type="eggNOG" id="KOG1547">
    <property type="taxonomic scope" value="Eukaryota"/>
</dbReference>
<dbReference type="GeneTree" id="ENSGT00940000158004"/>
<dbReference type="HOGENOM" id="CLU_2757124_0_0_1"/>
<dbReference type="InParanoid" id="Q9UH03"/>
<dbReference type="OMA" id="QCEFVYL"/>
<dbReference type="OrthoDB" id="416553at2759"/>
<dbReference type="PAN-GO" id="Q9UH03">
    <property type="GO annotations" value="10 GO annotations based on evolutionary models"/>
</dbReference>
<dbReference type="PhylomeDB" id="Q9UH03"/>
<dbReference type="TreeFam" id="TF101078"/>
<dbReference type="PathwayCommons" id="Q9UH03"/>
<dbReference type="SignaLink" id="Q9UH03"/>
<dbReference type="SIGNOR" id="Q9UH03"/>
<dbReference type="BioGRID-ORCS" id="55964">
    <property type="hits" value="10 hits in 1085 CRISPR screens"/>
</dbReference>
<dbReference type="CD-CODE" id="FB4E32DD">
    <property type="entry name" value="Presynaptic clusters and postsynaptic densities"/>
</dbReference>
<dbReference type="ChiTaRS" id="SEPT3">
    <property type="organism name" value="human"/>
</dbReference>
<dbReference type="EvolutionaryTrace" id="Q9UH03"/>
<dbReference type="GeneWiki" id="SEPT3"/>
<dbReference type="GenomeRNAi" id="55964"/>
<dbReference type="Pharos" id="Q9UH03">
    <property type="development level" value="Tbio"/>
</dbReference>
<dbReference type="PRO" id="PR:Q9UH03"/>
<dbReference type="Proteomes" id="UP000005640">
    <property type="component" value="Chromosome 22"/>
</dbReference>
<dbReference type="RNAct" id="Q9UH03">
    <property type="molecule type" value="protein"/>
</dbReference>
<dbReference type="Bgee" id="ENSG00000100167">
    <property type="expression patterns" value="Expressed in cortical plate and 138 other cell types or tissues"/>
</dbReference>
<dbReference type="ExpressionAtlas" id="Q9UH03">
    <property type="expression patterns" value="baseline and differential"/>
</dbReference>
<dbReference type="GO" id="GO:0032153">
    <property type="term" value="C:cell division site"/>
    <property type="evidence" value="ECO:0000318"/>
    <property type="project" value="GO_Central"/>
</dbReference>
<dbReference type="GO" id="GO:0015630">
    <property type="term" value="C:microtubule cytoskeleton"/>
    <property type="evidence" value="ECO:0000318"/>
    <property type="project" value="GO_Central"/>
</dbReference>
<dbReference type="GO" id="GO:0098793">
    <property type="term" value="C:presynapse"/>
    <property type="evidence" value="ECO:0000250"/>
    <property type="project" value="UniProtKB"/>
</dbReference>
<dbReference type="GO" id="GO:0031105">
    <property type="term" value="C:septin complex"/>
    <property type="evidence" value="ECO:0000250"/>
    <property type="project" value="UniProtKB"/>
</dbReference>
<dbReference type="GO" id="GO:0005940">
    <property type="term" value="C:septin ring"/>
    <property type="evidence" value="ECO:0000318"/>
    <property type="project" value="GO_Central"/>
</dbReference>
<dbReference type="GO" id="GO:0005525">
    <property type="term" value="F:GTP binding"/>
    <property type="evidence" value="ECO:0007669"/>
    <property type="project" value="UniProtKB-KW"/>
</dbReference>
<dbReference type="GO" id="GO:0003924">
    <property type="term" value="F:GTPase activity"/>
    <property type="evidence" value="ECO:0000318"/>
    <property type="project" value="GO_Central"/>
</dbReference>
<dbReference type="GO" id="GO:0042802">
    <property type="term" value="F:identical protein binding"/>
    <property type="evidence" value="ECO:0000353"/>
    <property type="project" value="IntAct"/>
</dbReference>
<dbReference type="GO" id="GO:0060090">
    <property type="term" value="F:molecular adaptor activity"/>
    <property type="evidence" value="ECO:0000318"/>
    <property type="project" value="GO_Central"/>
</dbReference>
<dbReference type="GO" id="GO:0061640">
    <property type="term" value="P:cytoskeleton-dependent cytokinesis"/>
    <property type="evidence" value="ECO:0000318"/>
    <property type="project" value="GO_Central"/>
</dbReference>
<dbReference type="GO" id="GO:0008104">
    <property type="term" value="P:protein localization"/>
    <property type="evidence" value="ECO:0000318"/>
    <property type="project" value="GO_Central"/>
</dbReference>
<dbReference type="CDD" id="cd01850">
    <property type="entry name" value="CDC_Septin"/>
    <property type="match status" value="1"/>
</dbReference>
<dbReference type="FunFam" id="3.40.50.300:FF:000387">
    <property type="entry name" value="neuronal-specific septin-3 isoform X1"/>
    <property type="match status" value="1"/>
</dbReference>
<dbReference type="Gene3D" id="3.40.50.300">
    <property type="entry name" value="P-loop containing nucleotide triphosphate hydrolases"/>
    <property type="match status" value="1"/>
</dbReference>
<dbReference type="InterPro" id="IPR030379">
    <property type="entry name" value="G_SEPTIN_dom"/>
</dbReference>
<dbReference type="InterPro" id="IPR027417">
    <property type="entry name" value="P-loop_NTPase"/>
</dbReference>
<dbReference type="InterPro" id="IPR016491">
    <property type="entry name" value="Septin"/>
</dbReference>
<dbReference type="InterPro" id="IPR008114">
    <property type="entry name" value="Septin3"/>
</dbReference>
<dbReference type="PANTHER" id="PTHR18884">
    <property type="entry name" value="SEPTIN"/>
    <property type="match status" value="1"/>
</dbReference>
<dbReference type="Pfam" id="PF00735">
    <property type="entry name" value="Septin"/>
    <property type="match status" value="1"/>
</dbReference>
<dbReference type="PIRSF" id="PIRSF006698">
    <property type="entry name" value="Septin"/>
    <property type="match status" value="1"/>
</dbReference>
<dbReference type="PRINTS" id="PR01741">
    <property type="entry name" value="SEPTIN3"/>
</dbReference>
<dbReference type="SUPFAM" id="SSF52540">
    <property type="entry name" value="P-loop containing nucleoside triphosphate hydrolases"/>
    <property type="match status" value="1"/>
</dbReference>
<dbReference type="PROSITE" id="PS51719">
    <property type="entry name" value="G_SEPTIN"/>
    <property type="match status" value="1"/>
</dbReference>
<gene>
    <name evidence="13" type="primary">SEPTIN3</name>
    <name type="synonym">SEP3</name>
    <name type="synonym">SEPT3</name>
</gene>
<keyword id="KW-0002">3D-structure</keyword>
<keyword id="KW-0025">Alternative splicing</keyword>
<keyword id="KW-0131">Cell cycle</keyword>
<keyword id="KW-0132">Cell division</keyword>
<keyword id="KW-0963">Cytoplasm</keyword>
<keyword id="KW-0206">Cytoskeleton</keyword>
<keyword id="KW-0342">GTP-binding</keyword>
<keyword id="KW-0547">Nucleotide-binding</keyword>
<keyword id="KW-0597">Phosphoprotein</keyword>
<keyword id="KW-1267">Proteomics identification</keyword>
<keyword id="KW-1185">Reference proteome</keyword>
<keyword id="KW-0770">Synapse</keyword>
<feature type="chain" id="PRO_0000173517" description="Neuronal-specific septin-3">
    <location>
        <begin position="1"/>
        <end position="358"/>
    </location>
</feature>
<feature type="domain" description="Septin-type G" evidence="3">
    <location>
        <begin position="58"/>
        <end position="331"/>
    </location>
</feature>
<feature type="region of interest" description="Disordered" evidence="4">
    <location>
        <begin position="1"/>
        <end position="30"/>
    </location>
</feature>
<feature type="region of interest" description="G1 motif" evidence="3">
    <location>
        <begin position="68"/>
        <end position="75"/>
    </location>
</feature>
<feature type="region of interest" description="G3 motif" evidence="3">
    <location>
        <begin position="125"/>
        <end position="128"/>
    </location>
</feature>
<feature type="region of interest" description="G4 motif" evidence="3">
    <location>
        <begin position="207"/>
        <end position="210"/>
    </location>
</feature>
<feature type="compositionally biased region" description="Basic and acidic residues" evidence="4">
    <location>
        <begin position="1"/>
        <end position="10"/>
    </location>
</feature>
<feature type="binding site" evidence="7">
    <location>
        <begin position="68"/>
        <end position="75"/>
    </location>
    <ligand>
        <name>GTP</name>
        <dbReference type="ChEBI" id="CHEBI:37565"/>
    </ligand>
</feature>
<feature type="binding site" evidence="7">
    <location>
        <position position="102"/>
    </location>
    <ligand>
        <name>GTP</name>
        <dbReference type="ChEBI" id="CHEBI:37565"/>
    </ligand>
</feature>
<feature type="binding site" evidence="7">
    <location>
        <begin position="208"/>
        <end position="216"/>
    </location>
    <ligand>
        <name>GTP</name>
        <dbReference type="ChEBI" id="CHEBI:37565"/>
    </ligand>
</feature>
<feature type="binding site" evidence="7">
    <location>
        <position position="265"/>
    </location>
    <ligand>
        <name>GTP</name>
        <dbReference type="ChEBI" id="CHEBI:37565"/>
    </ligand>
</feature>
<feature type="binding site" evidence="7">
    <location>
        <position position="280"/>
    </location>
    <ligand>
        <name>GTP</name>
        <dbReference type="ChEBI" id="CHEBI:37565"/>
    </ligand>
</feature>
<feature type="modified residue" description="Phosphoserine" evidence="2">
    <location>
        <position position="91"/>
    </location>
</feature>
<feature type="splice variant" id="VSP_025398" description="In isoform 3." evidence="8">
    <original>GQSGLGKSTLVNTLFK</original>
    <variation>AGSPLRSTSMSSTRSS</variation>
    <location>
        <begin position="68"/>
        <end position="83"/>
    </location>
</feature>
<feature type="splice variant" id="VSP_025399" description="In isoform 3." evidence="8">
    <location>
        <begin position="84"/>
        <end position="358"/>
    </location>
</feature>
<feature type="splice variant" id="VSP_006049" description="In isoform 2." evidence="8 9 10 11">
    <original>GEGLLGTVLPPVPATPCPTAE</original>
    <variation>VSVDTEESHDSNP</variation>
    <location>
        <begin position="338"/>
        <end position="358"/>
    </location>
</feature>
<feature type="helix" evidence="15">
    <location>
        <begin position="45"/>
        <end position="52"/>
    </location>
</feature>
<feature type="strand" evidence="15">
    <location>
        <begin position="59"/>
        <end position="69"/>
    </location>
</feature>
<feature type="strand" evidence="16">
    <location>
        <begin position="70"/>
        <end position="73"/>
    </location>
</feature>
<feature type="helix" evidence="15">
    <location>
        <begin position="74"/>
        <end position="84"/>
    </location>
</feature>
<feature type="helix" evidence="16">
    <location>
        <begin position="92"/>
        <end position="94"/>
    </location>
</feature>
<feature type="strand" evidence="15">
    <location>
        <begin position="106"/>
        <end position="114"/>
    </location>
</feature>
<feature type="strand" evidence="15">
    <location>
        <begin position="117"/>
        <end position="125"/>
    </location>
</feature>
<feature type="turn" evidence="16">
    <location>
        <begin position="127"/>
        <end position="130"/>
    </location>
</feature>
<feature type="strand" evidence="15">
    <location>
        <begin position="132"/>
        <end position="134"/>
    </location>
</feature>
<feature type="turn" evidence="15">
    <location>
        <begin position="136"/>
        <end position="139"/>
    </location>
</feature>
<feature type="helix" evidence="15">
    <location>
        <begin position="140"/>
        <end position="156"/>
    </location>
</feature>
<feature type="strand" evidence="15">
    <location>
        <begin position="173"/>
        <end position="178"/>
    </location>
</feature>
<feature type="strand" evidence="15">
    <location>
        <begin position="182"/>
        <end position="184"/>
    </location>
</feature>
<feature type="helix" evidence="15">
    <location>
        <begin position="187"/>
        <end position="196"/>
    </location>
</feature>
<feature type="turn" evidence="15">
    <location>
        <begin position="197"/>
        <end position="199"/>
    </location>
</feature>
<feature type="strand" evidence="15">
    <location>
        <begin position="202"/>
        <end position="208"/>
    </location>
</feature>
<feature type="helix" evidence="15">
    <location>
        <begin position="209"/>
        <end position="211"/>
    </location>
</feature>
<feature type="helix" evidence="15">
    <location>
        <begin position="214"/>
        <end position="230"/>
    </location>
</feature>
<feature type="helix" evidence="15">
    <location>
        <begin position="239"/>
        <end position="241"/>
    </location>
</feature>
<feature type="helix" evidence="15">
    <location>
        <begin position="245"/>
        <end position="256"/>
    </location>
</feature>
<feature type="strand" evidence="15">
    <location>
        <begin position="260"/>
        <end position="262"/>
    </location>
</feature>
<feature type="strand" evidence="15">
    <location>
        <begin position="269"/>
        <end position="272"/>
    </location>
</feature>
<feature type="strand" evidence="15">
    <location>
        <begin position="275"/>
        <end position="281"/>
    </location>
</feature>
<feature type="strand" evidence="15">
    <location>
        <begin position="286"/>
        <end position="288"/>
    </location>
</feature>
<feature type="turn" evidence="15">
    <location>
        <begin position="292"/>
        <end position="294"/>
    </location>
</feature>
<feature type="helix" evidence="15">
    <location>
        <begin position="297"/>
        <end position="305"/>
    </location>
</feature>
<feature type="turn" evidence="14">
    <location>
        <begin position="306"/>
        <end position="308"/>
    </location>
</feature>
<feature type="helix" evidence="15">
    <location>
        <begin position="309"/>
        <end position="318"/>
    </location>
</feature>
<feature type="helix" evidence="15">
    <location>
        <begin position="320"/>
        <end position="327"/>
    </location>
</feature>
<proteinExistence type="evidence at protein level"/>
<sequence length="358" mass="40704">MSKGLPETRTDAAMSELVPEPRPKPAVPMKPMSINSNLLGYIGIDTIIEQMRKKTMKTGFDFNIMVVGQSGLGKSTLVNTLFKSQVSRKASSWNREEKIPKTVEIKAIGHVIEEGGVKMKLTVIDTPGFGDQINNENCWEPIEKYINEQYEKFLKEEVNIARKKRIPDTRVHCCLYFISPTGHSLRPLDLEFMKHLSKVVNIIPVIAKADTMTLEEKSEFKQRVRKELEVNGIEFYPQKEFDEDLEDKTENDKIRQESMPFAVVGSDKEYQVNGKRVLGRKTPWGIIEVENLNHCEFALLRDFVIRTHLQDLKEVTHNIHYETYRAKRLNDNGGLPPGEGLLGTVLPPVPATPCPTAE</sequence>
<comment type="function">
    <text evidence="1 12">Filament-forming cytoskeletal GTPase (By similarity). May play a role in cytokinesis (Potential).</text>
</comment>
<comment type="subunit">
    <text evidence="1">Septins polymerize into heterooligomeric protein complexes that form filaments, and can associate with cellular membranes, actin filaments and microtubules. GTPase activity is required for filament formation (By similarity).</text>
</comment>
<comment type="interaction">
    <interactant intactId="EBI-727037">
        <id>Q9UH03</id>
    </interactant>
    <interactant intactId="EBI-295634">
        <id>Q16543</id>
        <label>CDC37</label>
    </interactant>
    <organismsDiffer>false</organismsDiffer>
    <experiments>3</experiments>
</comment>
<comment type="interaction">
    <interactant intactId="EBI-727037">
        <id>Q9UH03</id>
    </interactant>
    <interactant intactId="EBI-456371">
        <id>P61024</id>
        <label>CKS1B</label>
    </interactant>
    <organismsDiffer>false</organismsDiffer>
    <experiments>6</experiments>
</comment>
<comment type="interaction">
    <interactant intactId="EBI-727037">
        <id>Q9UH03</id>
    </interactant>
    <interactant intactId="EBI-742054">
        <id>Q96D03</id>
        <label>DDIT4L</label>
    </interactant>
    <organismsDiffer>false</organismsDiffer>
    <experiments>3</experiments>
</comment>
<comment type="interaction">
    <interactant intactId="EBI-727037">
        <id>Q9UH03</id>
    </interactant>
    <interactant intactId="EBI-720116">
        <id>P60520</id>
        <label>GABARAPL2</label>
    </interactant>
    <organismsDiffer>false</organismsDiffer>
    <experiments>2</experiments>
</comment>
<comment type="interaction">
    <interactant intactId="EBI-727037">
        <id>Q9UH03</id>
    </interactant>
    <interactant intactId="EBI-742828">
        <id>Q14847</id>
        <label>LASP1</label>
    </interactant>
    <organismsDiffer>false</organismsDiffer>
    <experiments>3</experiments>
</comment>
<comment type="interaction">
    <interactant intactId="EBI-727037">
        <id>Q9UH03</id>
    </interactant>
    <interactant intactId="EBI-373144">
        <id>Q9GZQ8</id>
        <label>MAP1LC3B</label>
    </interactant>
    <organismsDiffer>false</organismsDiffer>
    <experiments>3</experiments>
</comment>
<comment type="interaction">
    <interactant intactId="EBI-727037">
        <id>Q9UH03</id>
    </interactant>
    <interactant intactId="EBI-748229">
        <id>Q9H8S9</id>
        <label>MOB1A</label>
    </interactant>
    <organismsDiffer>false</organismsDiffer>
    <experiments>6</experiments>
</comment>
<comment type="interaction">
    <interactant intactId="EBI-727037">
        <id>Q9UH03</id>
    </interactant>
    <interactant intactId="EBI-741158">
        <id>Q96HA8</id>
        <label>NTAQ1</label>
    </interactant>
    <organismsDiffer>false</organismsDiffer>
    <experiments>3</experiments>
</comment>
<comment type="interaction">
    <interactant intactId="EBI-727037">
        <id>Q9UH03</id>
    </interactant>
    <interactant intactId="EBI-448407">
        <id>Q9HAT8</id>
        <label>PELI2</label>
    </interactant>
    <organismsDiffer>false</organismsDiffer>
    <experiments>3</experiments>
</comment>
<comment type="interaction">
    <interactant intactId="EBI-727037">
        <id>Q9UH03</id>
    </interactant>
    <interactant intactId="EBI-2340927">
        <id>P78317</id>
        <label>RNF4</label>
    </interactant>
    <organismsDiffer>false</organismsDiffer>
    <experiments>3</experiments>
</comment>
<comment type="interaction">
    <interactant intactId="EBI-727037">
        <id>Q9UH03</id>
    </interactant>
    <interactant intactId="EBI-373337">
        <id>O76064</id>
        <label>RNF8</label>
    </interactant>
    <organismsDiffer>false</organismsDiffer>
    <experiments>7</experiments>
</comment>
<comment type="interaction">
    <interactant intactId="EBI-727037">
        <id>Q9UH03</id>
    </interactant>
    <interactant intactId="EBI-727004">
        <id>O00560</id>
        <label>SDCBP</label>
    </interactant>
    <organismsDiffer>false</organismsDiffer>
    <experiments>6</experiments>
</comment>
<comment type="interaction">
    <interactant intactId="EBI-727037">
        <id>Q9UH03</id>
    </interactant>
    <interactant intactId="EBI-693002">
        <id>Q8WYJ6</id>
        <label>SEPTIN1</label>
    </interactant>
    <organismsDiffer>false</organismsDiffer>
    <experiments>5</experiments>
</comment>
<comment type="interaction">
    <interactant intactId="EBI-727037">
        <id>Q9UH03</id>
    </interactant>
    <interactant intactId="EBI-727037">
        <id>Q9UH03</id>
        <label>SEPTIN3</label>
    </interactant>
    <organismsDiffer>false</organismsDiffer>
    <experiments>4</experiments>
</comment>
<comment type="interaction">
    <interactant intactId="EBI-727037">
        <id>Q9UH03</id>
    </interactant>
    <interactant intactId="EBI-745901">
        <id>Q14141</id>
        <label>SEPTIN6</label>
    </interactant>
    <organismsDiffer>false</organismsDiffer>
    <experiments>7</experiments>
</comment>
<comment type="interaction">
    <interactant intactId="EBI-727037">
        <id>Q9UH03</id>
    </interactant>
    <interactant intactId="EBI-12176399">
        <id>Q15043-2</id>
        <label>SLC39A14</label>
    </interactant>
    <organismsDiffer>false</organismsDiffer>
    <experiments>3</experiments>
</comment>
<comment type="subcellular location">
    <subcellularLocation>
        <location>Cytoplasm</location>
    </subcellularLocation>
    <subcellularLocation>
        <location evidence="1">Cytoplasm</location>
        <location evidence="1">Cytoskeleton</location>
    </subcellularLocation>
    <subcellularLocation>
        <location evidence="1">Synapse</location>
    </subcellularLocation>
</comment>
<comment type="alternative products">
    <event type="alternative splicing"/>
    <isoform>
        <id>Q9UH03-1</id>
        <name>1</name>
        <name>A</name>
        <name>SEP3A</name>
        <sequence type="displayed"/>
    </isoform>
    <isoform>
        <id>Q9UH03-2</id>
        <name>2</name>
        <name>B</name>
        <name>SEP3B</name>
        <sequence type="described" ref="VSP_006049"/>
    </isoform>
    <isoform>
        <id>Q9UH03-3</id>
        <name>3</name>
        <name>C</name>
        <name>SEP3C</name>
        <sequence type="described" ref="VSP_025398 VSP_025399"/>
    </isoform>
</comment>
<comment type="tissue specificity">
    <text evidence="5 6">Brain-specific.</text>
</comment>
<comment type="induction">
    <text evidence="5">Up-regulated during neuronal differentiation.</text>
</comment>
<comment type="PTM">
    <text evidence="1">Phosphorylated by PKG on serine residues. Phosphorylated by PKG on Ser-91 (By similarity).</text>
</comment>
<comment type="similarity">
    <text evidence="3">Belongs to the TRAFAC class TrmE-Era-EngA-EngB-Septin-like GTPase superfamily. Septin GTPase family.</text>
</comment>
<comment type="sequence caution" evidence="12">
    <conflict type="erroneous initiation">
        <sequence resource="EMBL-CDS" id="AAG00517"/>
    </conflict>
</comment>
<comment type="sequence caution" evidence="12">
    <conflict type="erroneous initiation">
        <sequence resource="EMBL-CDS" id="AAG00518"/>
    </conflict>
</comment>
<comment type="sequence caution" evidence="12">
    <conflict type="erroneous initiation">
        <sequence resource="EMBL-CDS" id="AAG00519"/>
    </conflict>
</comment>
<comment type="sequence caution" evidence="12">
    <conflict type="erroneous initiation">
        <sequence resource="EMBL-CDS" id="AAI11780"/>
    </conflict>
</comment>
<comment type="sequence caution" evidence="12">
    <conflict type="erroneous initiation">
        <sequence resource="EMBL-CDS" id="CAD38797"/>
    </conflict>
</comment>
<comment type="sequence caution" evidence="12">
    <conflict type="erroneous initiation">
        <sequence resource="EMBL-CDS" id="CAG30458"/>
    </conflict>
</comment>
<name>SEPT3_HUMAN</name>
<reference key="1">
    <citation type="journal article" date="2001" name="Biochem. Biophys. Res. Commun.">
        <title>Human septin 3 on chromosome 22q13.2 is upregulated by neuronal differentiation.</title>
        <authorList>
            <person name="Methner A."/>
            <person name="Leypoldt F."/>
            <person name="Joost P."/>
            <person name="Lewerenz J."/>
        </authorList>
    </citation>
    <scope>NUCLEOTIDE SEQUENCE [MRNA] (ISOFORMS 1; 2 AND 3)</scope>
    <scope>INDUCTION</scope>
    <scope>TISSUE SPECIFICITY</scope>
</reference>
<reference key="2">
    <citation type="journal article" date="2004" name="Genome Biol.">
        <title>A genome annotation-driven approach to cloning the human ORFeome.</title>
        <authorList>
            <person name="Collins J.E."/>
            <person name="Wright C.L."/>
            <person name="Edwards C.A."/>
            <person name="Davis M.P."/>
            <person name="Grinham J.A."/>
            <person name="Cole C.G."/>
            <person name="Goward M.E."/>
            <person name="Aguado B."/>
            <person name="Mallya M."/>
            <person name="Mokrab Y."/>
            <person name="Huckle E.J."/>
            <person name="Beare D.M."/>
            <person name="Dunham I."/>
        </authorList>
    </citation>
    <scope>NUCLEOTIDE SEQUENCE [LARGE SCALE MRNA] (ISOFORM 2)</scope>
</reference>
<reference key="3">
    <citation type="journal article" date="2007" name="BMC Genomics">
        <title>The full-ORF clone resource of the German cDNA consortium.</title>
        <authorList>
            <person name="Bechtel S."/>
            <person name="Rosenfelder H."/>
            <person name="Duda A."/>
            <person name="Schmidt C.P."/>
            <person name="Ernst U."/>
            <person name="Wellenreuther R."/>
            <person name="Mehrle A."/>
            <person name="Schuster C."/>
            <person name="Bahr A."/>
            <person name="Bloecker H."/>
            <person name="Heubner D."/>
            <person name="Hoerlein A."/>
            <person name="Michel G."/>
            <person name="Wedler H."/>
            <person name="Koehrer K."/>
            <person name="Ottenwaelder B."/>
            <person name="Poustka A."/>
            <person name="Wiemann S."/>
            <person name="Schupp I."/>
        </authorList>
    </citation>
    <scope>NUCLEOTIDE SEQUENCE [LARGE SCALE MRNA] (ISOFORM 2)</scope>
    <source>
        <tissue>Amygdala</tissue>
    </source>
</reference>
<reference key="4">
    <citation type="journal article" date="1999" name="Nature">
        <title>The DNA sequence of human chromosome 22.</title>
        <authorList>
            <person name="Dunham I."/>
            <person name="Hunt A.R."/>
            <person name="Collins J.E."/>
            <person name="Bruskiewich R."/>
            <person name="Beare D.M."/>
            <person name="Clamp M."/>
            <person name="Smink L.J."/>
            <person name="Ainscough R."/>
            <person name="Almeida J.P."/>
            <person name="Babbage A.K."/>
            <person name="Bagguley C."/>
            <person name="Bailey J."/>
            <person name="Barlow K.F."/>
            <person name="Bates K.N."/>
            <person name="Beasley O.P."/>
            <person name="Bird C.P."/>
            <person name="Blakey S.E."/>
            <person name="Bridgeman A.M."/>
            <person name="Buck D."/>
            <person name="Burgess J."/>
            <person name="Burrill W.D."/>
            <person name="Burton J."/>
            <person name="Carder C."/>
            <person name="Carter N.P."/>
            <person name="Chen Y."/>
            <person name="Clark G."/>
            <person name="Clegg S.M."/>
            <person name="Cobley V.E."/>
            <person name="Cole C.G."/>
            <person name="Collier R.E."/>
            <person name="Connor R."/>
            <person name="Conroy D."/>
            <person name="Corby N.R."/>
            <person name="Coville G.J."/>
            <person name="Cox A.V."/>
            <person name="Davis J."/>
            <person name="Dawson E."/>
            <person name="Dhami P.D."/>
            <person name="Dockree C."/>
            <person name="Dodsworth S.J."/>
            <person name="Durbin R.M."/>
            <person name="Ellington A.G."/>
            <person name="Evans K.L."/>
            <person name="Fey J.M."/>
            <person name="Fleming K."/>
            <person name="French L."/>
            <person name="Garner A.A."/>
            <person name="Gilbert J.G.R."/>
            <person name="Goward M.E."/>
            <person name="Grafham D.V."/>
            <person name="Griffiths M.N.D."/>
            <person name="Hall C."/>
            <person name="Hall R.E."/>
            <person name="Hall-Tamlyn G."/>
            <person name="Heathcott R.W."/>
            <person name="Ho S."/>
            <person name="Holmes S."/>
            <person name="Hunt S.E."/>
            <person name="Jones M.C."/>
            <person name="Kershaw J."/>
            <person name="Kimberley A.M."/>
            <person name="King A."/>
            <person name="Laird G.K."/>
            <person name="Langford C.F."/>
            <person name="Leversha M.A."/>
            <person name="Lloyd C."/>
            <person name="Lloyd D.M."/>
            <person name="Martyn I.D."/>
            <person name="Mashreghi-Mohammadi M."/>
            <person name="Matthews L.H."/>
            <person name="Mccann O.T."/>
            <person name="Mcclay J."/>
            <person name="Mclaren S."/>
            <person name="McMurray A.A."/>
            <person name="Milne S.A."/>
            <person name="Mortimore B.J."/>
            <person name="Odell C.N."/>
            <person name="Pavitt R."/>
            <person name="Pearce A.V."/>
            <person name="Pearson D."/>
            <person name="Phillimore B.J.C.T."/>
            <person name="Phillips S.H."/>
            <person name="Plumb R.W."/>
            <person name="Ramsay H."/>
            <person name="Ramsey Y."/>
            <person name="Rogers L."/>
            <person name="Ross M.T."/>
            <person name="Scott C.E."/>
            <person name="Sehra H.K."/>
            <person name="Skuce C.D."/>
            <person name="Smalley S."/>
            <person name="Smith M.L."/>
            <person name="Soderlund C."/>
            <person name="Spragon L."/>
            <person name="Steward C.A."/>
            <person name="Sulston J.E."/>
            <person name="Swann R.M."/>
            <person name="Vaudin M."/>
            <person name="Wall M."/>
            <person name="Wallis J.M."/>
            <person name="Whiteley M.N."/>
            <person name="Willey D.L."/>
            <person name="Williams L."/>
            <person name="Williams S.A."/>
            <person name="Williamson H."/>
            <person name="Wilmer T.E."/>
            <person name="Wilming L."/>
            <person name="Wright C.L."/>
            <person name="Hubbard T."/>
            <person name="Bentley D.R."/>
            <person name="Beck S."/>
            <person name="Rogers J."/>
            <person name="Shimizu N."/>
            <person name="Minoshima S."/>
            <person name="Kawasaki K."/>
            <person name="Sasaki T."/>
            <person name="Asakawa S."/>
            <person name="Kudoh J."/>
            <person name="Shintani A."/>
            <person name="Shibuya K."/>
            <person name="Yoshizaki Y."/>
            <person name="Aoki N."/>
            <person name="Mitsuyama S."/>
            <person name="Roe B.A."/>
            <person name="Chen F."/>
            <person name="Chu L."/>
            <person name="Crabtree J."/>
            <person name="Deschamps S."/>
            <person name="Do A."/>
            <person name="Do T."/>
            <person name="Dorman A."/>
            <person name="Fang F."/>
            <person name="Fu Y."/>
            <person name="Hu P."/>
            <person name="Hua A."/>
            <person name="Kenton S."/>
            <person name="Lai H."/>
            <person name="Lao H.I."/>
            <person name="Lewis J."/>
            <person name="Lewis S."/>
            <person name="Lin S.-P."/>
            <person name="Loh P."/>
            <person name="Malaj E."/>
            <person name="Nguyen T."/>
            <person name="Pan H."/>
            <person name="Phan S."/>
            <person name="Qi S."/>
            <person name="Qian Y."/>
            <person name="Ray L."/>
            <person name="Ren Q."/>
            <person name="Shaull S."/>
            <person name="Sloan D."/>
            <person name="Song L."/>
            <person name="Wang Q."/>
            <person name="Wang Y."/>
            <person name="Wang Z."/>
            <person name="White J."/>
            <person name="Willingham D."/>
            <person name="Wu H."/>
            <person name="Yao Z."/>
            <person name="Zhan M."/>
            <person name="Zhang G."/>
            <person name="Chissoe S."/>
            <person name="Murray J."/>
            <person name="Miller N."/>
            <person name="Minx P."/>
            <person name="Fulton R."/>
            <person name="Johnson D."/>
            <person name="Bemis G."/>
            <person name="Bentley D."/>
            <person name="Bradshaw H."/>
            <person name="Bourne S."/>
            <person name="Cordes M."/>
            <person name="Du Z."/>
            <person name="Fulton L."/>
            <person name="Goela D."/>
            <person name="Graves T."/>
            <person name="Hawkins J."/>
            <person name="Hinds K."/>
            <person name="Kemp K."/>
            <person name="Latreille P."/>
            <person name="Layman D."/>
            <person name="Ozersky P."/>
            <person name="Rohlfing T."/>
            <person name="Scheet P."/>
            <person name="Walker C."/>
            <person name="Wamsley A."/>
            <person name="Wohldmann P."/>
            <person name="Pepin K."/>
            <person name="Nelson J."/>
            <person name="Korf I."/>
            <person name="Bedell J.A."/>
            <person name="Hillier L.W."/>
            <person name="Mardis E."/>
            <person name="Waterston R."/>
            <person name="Wilson R."/>
            <person name="Emanuel B.S."/>
            <person name="Shaikh T."/>
            <person name="Kurahashi H."/>
            <person name="Saitta S."/>
            <person name="Budarf M.L."/>
            <person name="McDermid H.E."/>
            <person name="Johnson A."/>
            <person name="Wong A.C.C."/>
            <person name="Morrow B.E."/>
            <person name="Edelmann L."/>
            <person name="Kim U.J."/>
            <person name="Shizuya H."/>
            <person name="Simon M.I."/>
            <person name="Dumanski J.P."/>
            <person name="Peyrard M."/>
            <person name="Kedra D."/>
            <person name="Seroussi E."/>
            <person name="Fransson I."/>
            <person name="Tapia I."/>
            <person name="Bruder C.E."/>
            <person name="O'Brien K.P."/>
            <person name="Wilkinson P."/>
            <person name="Bodenteich A."/>
            <person name="Hartman K."/>
            <person name="Hu X."/>
            <person name="Khan A.S."/>
            <person name="Lane L."/>
            <person name="Tilahun Y."/>
            <person name="Wright H."/>
        </authorList>
    </citation>
    <scope>NUCLEOTIDE SEQUENCE [LARGE SCALE GENOMIC DNA]</scope>
</reference>
<reference key="5">
    <citation type="submission" date="2005-07" db="EMBL/GenBank/DDBJ databases">
        <authorList>
            <person name="Mural R.J."/>
            <person name="Istrail S."/>
            <person name="Sutton G.G."/>
            <person name="Florea L."/>
            <person name="Halpern A.L."/>
            <person name="Mobarry C.M."/>
            <person name="Lippert R."/>
            <person name="Walenz B."/>
            <person name="Shatkay H."/>
            <person name="Dew I."/>
            <person name="Miller J.R."/>
            <person name="Flanigan M.J."/>
            <person name="Edwards N.J."/>
            <person name="Bolanos R."/>
            <person name="Fasulo D."/>
            <person name="Halldorsson B.V."/>
            <person name="Hannenhalli S."/>
            <person name="Turner R."/>
            <person name="Yooseph S."/>
            <person name="Lu F."/>
            <person name="Nusskern D.R."/>
            <person name="Shue B.C."/>
            <person name="Zheng X.H."/>
            <person name="Zhong F."/>
            <person name="Delcher A.L."/>
            <person name="Huson D.H."/>
            <person name="Kravitz S.A."/>
            <person name="Mouchard L."/>
            <person name="Reinert K."/>
            <person name="Remington K.A."/>
            <person name="Clark A.G."/>
            <person name="Waterman M.S."/>
            <person name="Eichler E.E."/>
            <person name="Adams M.D."/>
            <person name="Hunkapiller M.W."/>
            <person name="Myers E.W."/>
            <person name="Venter J.C."/>
        </authorList>
    </citation>
    <scope>NUCLEOTIDE SEQUENCE [LARGE SCALE GENOMIC DNA]</scope>
</reference>
<reference key="6">
    <citation type="journal article" date="2004" name="Genome Res.">
        <title>The status, quality, and expansion of the NIH full-length cDNA project: the Mammalian Gene Collection (MGC).</title>
        <authorList>
            <consortium name="The MGC Project Team"/>
        </authorList>
    </citation>
    <scope>NUCLEOTIDE SEQUENCE [LARGE SCALE MRNA] (ISOFORM 1)</scope>
</reference>
<reference key="7">
    <citation type="submission" date="2005-03" db="EMBL/GenBank/DDBJ databases">
        <authorList>
            <person name="Totoki Y."/>
            <person name="Toyoda A."/>
            <person name="Takeda T."/>
            <person name="Sakaki Y."/>
            <person name="Tanaka A."/>
            <person name="Yokoyama S."/>
            <person name="Ohara O."/>
            <person name="Nagase T."/>
            <person name="Kikuno R.F."/>
        </authorList>
    </citation>
    <scope>NUCLEOTIDE SEQUENCE [LARGE SCALE MRNA] OF 133-358 (ISOFORM 2)</scope>
    <source>
        <tissue>Brain</tissue>
    </source>
</reference>
<reference key="8">
    <citation type="journal article" date="2005" name="J. Pathol.">
        <title>Expression profiling the human septin gene family.</title>
        <authorList>
            <person name="Hall P.A."/>
            <person name="Jung K."/>
            <person name="Hillan K.J."/>
            <person name="Russell S.E.H."/>
        </authorList>
    </citation>
    <scope>TISSUE SPECIFICITY</scope>
</reference>
<reference key="9">
    <citation type="journal article" date="2015" name="Proteomics">
        <title>N-terminome analysis of the human mitochondrial proteome.</title>
        <authorList>
            <person name="Vaca Jacome A.S."/>
            <person name="Rabilloud T."/>
            <person name="Schaeffer-Reiss C."/>
            <person name="Rompais M."/>
            <person name="Ayoub D."/>
            <person name="Lane L."/>
            <person name="Bairoch A."/>
            <person name="Van Dorsselaer A."/>
            <person name="Carapito C."/>
        </authorList>
    </citation>
    <scope>IDENTIFICATION BY MASS SPECTROMETRY [LARGE SCALE ANALYSIS]</scope>
</reference>
<reference key="10">
    <citation type="journal article" date="2013" name="Biochem. J.">
        <title>The structure and properties of septin 3: a possible missing link in septin filament formation.</title>
        <authorList>
            <person name="Macedo J.N."/>
            <person name="Valadares N.F."/>
            <person name="Marques I.A."/>
            <person name="Ferreira F.M."/>
            <person name="Damalio J.C."/>
            <person name="Pereira H.M."/>
            <person name="Garratt R.C."/>
            <person name="Araujo A.P."/>
        </authorList>
    </citation>
    <scope>X-RAY CRYSTALLOGRAPHY (2.88 ANGSTROMS) OF 60-329</scope>
    <scope>GTP-BINDING SITES</scope>
</reference>